<dbReference type="EMBL" id="X69150">
    <property type="protein sequence ID" value="CAB56794.1"/>
    <property type="molecule type" value="mRNA"/>
</dbReference>
<dbReference type="EMBL" id="AL031228">
    <property type="protein sequence ID" value="CAA20231.1"/>
    <property type="molecule type" value="Genomic_DNA"/>
</dbReference>
<dbReference type="EMBL" id="AL662827">
    <property type="status" value="NOT_ANNOTATED_CDS"/>
    <property type="molecule type" value="Genomic_DNA"/>
</dbReference>
<dbReference type="EMBL" id="AL713971">
    <property type="status" value="NOT_ANNOTATED_CDS"/>
    <property type="molecule type" value="Genomic_DNA"/>
</dbReference>
<dbReference type="EMBL" id="AL645940">
    <property type="status" value="NOT_ANNOTATED_CDS"/>
    <property type="molecule type" value="Genomic_DNA"/>
</dbReference>
<dbReference type="EMBL" id="AL662820">
    <property type="status" value="NOT_ANNOTATED_CDS"/>
    <property type="molecule type" value="Genomic_DNA"/>
</dbReference>
<dbReference type="EMBL" id="AL844527">
    <property type="status" value="NOT_ANNOTATED_CDS"/>
    <property type="molecule type" value="Genomic_DNA"/>
</dbReference>
<dbReference type="EMBL" id="CR759817">
    <property type="status" value="NOT_ANNOTATED_CDS"/>
    <property type="molecule type" value="Genomic_DNA"/>
</dbReference>
<dbReference type="EMBL" id="CR759786">
    <property type="status" value="NOT_ANNOTATED_CDS"/>
    <property type="molecule type" value="Genomic_DNA"/>
</dbReference>
<dbReference type="EMBL" id="CH471081">
    <property type="protein sequence ID" value="EAX03695.1"/>
    <property type="molecule type" value="Genomic_DNA"/>
</dbReference>
<dbReference type="EMBL" id="BC101786">
    <property type="protein sequence ID" value="AAI01787.1"/>
    <property type="molecule type" value="mRNA"/>
</dbReference>
<dbReference type="EMBL" id="BC101788">
    <property type="protein sequence ID" value="AAI01789.1"/>
    <property type="molecule type" value="mRNA"/>
</dbReference>
<dbReference type="EMBL" id="BC106063">
    <property type="protein sequence ID" value="AAI06064.1"/>
    <property type="molecule type" value="mRNA"/>
</dbReference>
<dbReference type="CCDS" id="CCDS4771.1"/>
<dbReference type="PIR" id="S30393">
    <property type="entry name" value="S30393"/>
</dbReference>
<dbReference type="RefSeq" id="NP_072045.1">
    <property type="nucleotide sequence ID" value="NM_022551.3"/>
</dbReference>
<dbReference type="PDB" id="4UG0">
    <property type="method" value="EM"/>
    <property type="chains" value="SS=1-152"/>
</dbReference>
<dbReference type="PDB" id="4V6X">
    <property type="method" value="EM"/>
    <property type="resolution" value="5.00 A"/>
    <property type="chains" value="AS=1-152"/>
</dbReference>
<dbReference type="PDB" id="5A2Q">
    <property type="method" value="EM"/>
    <property type="resolution" value="3.90 A"/>
    <property type="chains" value="S=1-152"/>
</dbReference>
<dbReference type="PDB" id="5AJ0">
    <property type="method" value="EM"/>
    <property type="resolution" value="3.50 A"/>
    <property type="chains" value="BS=1-152"/>
</dbReference>
<dbReference type="PDB" id="5FLX">
    <property type="method" value="EM"/>
    <property type="resolution" value="3.90 A"/>
    <property type="chains" value="S=1-152"/>
</dbReference>
<dbReference type="PDB" id="5LKS">
    <property type="method" value="EM"/>
    <property type="resolution" value="3.60 A"/>
    <property type="chains" value="SS=1-152"/>
</dbReference>
<dbReference type="PDB" id="5OA3">
    <property type="method" value="EM"/>
    <property type="resolution" value="4.30 A"/>
    <property type="chains" value="S=1-152"/>
</dbReference>
<dbReference type="PDB" id="5T2C">
    <property type="method" value="EM"/>
    <property type="resolution" value="3.60 A"/>
    <property type="chains" value="A0=1-152"/>
</dbReference>
<dbReference type="PDB" id="5VYC">
    <property type="method" value="X-ray"/>
    <property type="resolution" value="6.00 A"/>
    <property type="chains" value="S1/S2/S3/S4/S5/S6=1-152"/>
</dbReference>
<dbReference type="PDB" id="6FEC">
    <property type="method" value="EM"/>
    <property type="resolution" value="6.30 A"/>
    <property type="chains" value="L=6-142"/>
</dbReference>
<dbReference type="PDB" id="6G18">
    <property type="method" value="EM"/>
    <property type="resolution" value="3.60 A"/>
    <property type="chains" value="S=1-152"/>
</dbReference>
<dbReference type="PDB" id="6G4S">
    <property type="method" value="EM"/>
    <property type="resolution" value="4.00 A"/>
    <property type="chains" value="S=1-152"/>
</dbReference>
<dbReference type="PDB" id="6G4W">
    <property type="method" value="EM"/>
    <property type="resolution" value="4.50 A"/>
    <property type="chains" value="S=1-152"/>
</dbReference>
<dbReference type="PDB" id="6G51">
    <property type="method" value="EM"/>
    <property type="resolution" value="4.10 A"/>
    <property type="chains" value="S=1-152"/>
</dbReference>
<dbReference type="PDB" id="6G53">
    <property type="method" value="EM"/>
    <property type="resolution" value="4.50 A"/>
    <property type="chains" value="S=1-152"/>
</dbReference>
<dbReference type="PDB" id="6G5H">
    <property type="method" value="EM"/>
    <property type="resolution" value="3.60 A"/>
    <property type="chains" value="S=1-152"/>
</dbReference>
<dbReference type="PDB" id="6G5I">
    <property type="method" value="EM"/>
    <property type="resolution" value="3.50 A"/>
    <property type="chains" value="S=1-152"/>
</dbReference>
<dbReference type="PDB" id="6IP5">
    <property type="method" value="EM"/>
    <property type="resolution" value="3.90 A"/>
    <property type="chains" value="2z=1-152"/>
</dbReference>
<dbReference type="PDB" id="6IP6">
    <property type="method" value="EM"/>
    <property type="resolution" value="4.50 A"/>
    <property type="chains" value="2z=1-152"/>
</dbReference>
<dbReference type="PDB" id="6IP8">
    <property type="method" value="EM"/>
    <property type="resolution" value="3.90 A"/>
    <property type="chains" value="2z=1-152"/>
</dbReference>
<dbReference type="PDB" id="6OLE">
    <property type="method" value="EM"/>
    <property type="resolution" value="3.10 A"/>
    <property type="chains" value="SS=1-145"/>
</dbReference>
<dbReference type="PDB" id="6OLF">
    <property type="method" value="EM"/>
    <property type="resolution" value="3.90 A"/>
    <property type="chains" value="SS=1-145"/>
</dbReference>
<dbReference type="PDB" id="6OLG">
    <property type="method" value="EM"/>
    <property type="resolution" value="3.40 A"/>
    <property type="chains" value="BS=4-142"/>
</dbReference>
<dbReference type="PDB" id="6OLI">
    <property type="method" value="EM"/>
    <property type="resolution" value="3.50 A"/>
    <property type="chains" value="SS=1-145"/>
</dbReference>
<dbReference type="PDB" id="6OLZ">
    <property type="method" value="EM"/>
    <property type="resolution" value="3.90 A"/>
    <property type="chains" value="BS=4-142"/>
</dbReference>
<dbReference type="PDB" id="6OM0">
    <property type="method" value="EM"/>
    <property type="resolution" value="3.10 A"/>
    <property type="chains" value="SS=1-145"/>
</dbReference>
<dbReference type="PDB" id="6OM7">
    <property type="method" value="EM"/>
    <property type="resolution" value="3.70 A"/>
    <property type="chains" value="SS=1-145"/>
</dbReference>
<dbReference type="PDB" id="6QZP">
    <property type="method" value="EM"/>
    <property type="resolution" value="2.90 A"/>
    <property type="chains" value="SS=1-145"/>
</dbReference>
<dbReference type="PDB" id="6XA1">
    <property type="method" value="EM"/>
    <property type="resolution" value="2.80 A"/>
    <property type="chains" value="SS=3-145"/>
</dbReference>
<dbReference type="PDB" id="6Y0G">
    <property type="method" value="EM"/>
    <property type="resolution" value="3.20 A"/>
    <property type="chains" value="SS=1-152"/>
</dbReference>
<dbReference type="PDB" id="6Y2L">
    <property type="method" value="EM"/>
    <property type="resolution" value="3.00 A"/>
    <property type="chains" value="SS=1-152"/>
</dbReference>
<dbReference type="PDB" id="6Y57">
    <property type="method" value="EM"/>
    <property type="resolution" value="3.50 A"/>
    <property type="chains" value="SS=1-152"/>
</dbReference>
<dbReference type="PDB" id="6YBS">
    <property type="method" value="EM"/>
    <property type="resolution" value="3.10 A"/>
    <property type="chains" value="f=1-152"/>
</dbReference>
<dbReference type="PDB" id="6Z6L">
    <property type="method" value="EM"/>
    <property type="resolution" value="3.00 A"/>
    <property type="chains" value="SS=1-152"/>
</dbReference>
<dbReference type="PDB" id="6Z6M">
    <property type="method" value="EM"/>
    <property type="resolution" value="3.10 A"/>
    <property type="chains" value="SS=1-152"/>
</dbReference>
<dbReference type="PDB" id="6Z6N">
    <property type="method" value="EM"/>
    <property type="resolution" value="2.90 A"/>
    <property type="chains" value="SS=1-152"/>
</dbReference>
<dbReference type="PDB" id="6ZLW">
    <property type="method" value="EM"/>
    <property type="resolution" value="2.60 A"/>
    <property type="chains" value="T=1-152"/>
</dbReference>
<dbReference type="PDB" id="6ZM7">
    <property type="method" value="EM"/>
    <property type="resolution" value="2.70 A"/>
    <property type="chains" value="SS=1-152"/>
</dbReference>
<dbReference type="PDB" id="6ZME">
    <property type="method" value="EM"/>
    <property type="resolution" value="3.00 A"/>
    <property type="chains" value="SS=1-152"/>
</dbReference>
<dbReference type="PDB" id="6ZMI">
    <property type="method" value="EM"/>
    <property type="resolution" value="2.60 A"/>
    <property type="chains" value="SS=1-152"/>
</dbReference>
<dbReference type="PDB" id="6ZMO">
    <property type="method" value="EM"/>
    <property type="resolution" value="3.10 A"/>
    <property type="chains" value="SS=1-152"/>
</dbReference>
<dbReference type="PDB" id="6ZMT">
    <property type="method" value="EM"/>
    <property type="resolution" value="3.00 A"/>
    <property type="chains" value="T=1-152"/>
</dbReference>
<dbReference type="PDB" id="6ZMW">
    <property type="method" value="EM"/>
    <property type="resolution" value="3.70 A"/>
    <property type="chains" value="f=1-152"/>
</dbReference>
<dbReference type="PDB" id="6ZN5">
    <property type="method" value="EM"/>
    <property type="resolution" value="3.20 A"/>
    <property type="chains" value="T=3-145"/>
</dbReference>
<dbReference type="PDB" id="6ZOJ">
    <property type="method" value="EM"/>
    <property type="resolution" value="2.80 A"/>
    <property type="chains" value="S=1-152"/>
</dbReference>
<dbReference type="PDB" id="6ZOL">
    <property type="method" value="EM"/>
    <property type="resolution" value="2.80 A"/>
    <property type="chains" value="S=1-152"/>
</dbReference>
<dbReference type="PDB" id="6ZON">
    <property type="method" value="EM"/>
    <property type="resolution" value="3.00 A"/>
    <property type="chains" value="k=1-152"/>
</dbReference>
<dbReference type="PDB" id="6ZP4">
    <property type="method" value="EM"/>
    <property type="resolution" value="2.90 A"/>
    <property type="chains" value="k=1-152"/>
</dbReference>
<dbReference type="PDB" id="6ZUO">
    <property type="method" value="EM"/>
    <property type="resolution" value="3.10 A"/>
    <property type="chains" value="S=1-152"/>
</dbReference>
<dbReference type="PDB" id="6ZV6">
    <property type="method" value="EM"/>
    <property type="resolution" value="2.90 A"/>
    <property type="chains" value="S=1-152"/>
</dbReference>
<dbReference type="PDB" id="6ZVH">
    <property type="method" value="EM"/>
    <property type="resolution" value="2.90 A"/>
    <property type="chains" value="S=1-145"/>
</dbReference>
<dbReference type="PDB" id="6ZVJ">
    <property type="method" value="EM"/>
    <property type="resolution" value="3.80 A"/>
    <property type="chains" value="k=3-142"/>
</dbReference>
<dbReference type="PDB" id="6ZXD">
    <property type="method" value="EM"/>
    <property type="resolution" value="3.20 A"/>
    <property type="chains" value="S=1-152"/>
</dbReference>
<dbReference type="PDB" id="6ZXE">
    <property type="method" value="EM"/>
    <property type="resolution" value="3.00 A"/>
    <property type="chains" value="S=1-152"/>
</dbReference>
<dbReference type="PDB" id="6ZXF">
    <property type="method" value="EM"/>
    <property type="resolution" value="3.70 A"/>
    <property type="chains" value="S=1-152"/>
</dbReference>
<dbReference type="PDB" id="6ZXG">
    <property type="method" value="EM"/>
    <property type="resolution" value="2.60 A"/>
    <property type="chains" value="S=1-152"/>
</dbReference>
<dbReference type="PDB" id="6ZXH">
    <property type="method" value="EM"/>
    <property type="resolution" value="2.70 A"/>
    <property type="chains" value="S=1-152"/>
</dbReference>
<dbReference type="PDB" id="7A09">
    <property type="method" value="EM"/>
    <property type="resolution" value="3.50 A"/>
    <property type="chains" value="k=1-152"/>
</dbReference>
<dbReference type="PDB" id="7K5I">
    <property type="method" value="EM"/>
    <property type="resolution" value="2.90 A"/>
    <property type="chains" value="S=1-152"/>
</dbReference>
<dbReference type="PDB" id="7QP6">
    <property type="method" value="EM"/>
    <property type="resolution" value="4.70 A"/>
    <property type="chains" value="f=1-152"/>
</dbReference>
<dbReference type="PDB" id="7QP7">
    <property type="method" value="EM"/>
    <property type="resolution" value="3.70 A"/>
    <property type="chains" value="f=1-152"/>
</dbReference>
<dbReference type="PDB" id="7R4X">
    <property type="method" value="EM"/>
    <property type="resolution" value="2.15 A"/>
    <property type="chains" value="S=1-152"/>
</dbReference>
<dbReference type="PDB" id="7TQL">
    <property type="method" value="EM"/>
    <property type="resolution" value="3.40 A"/>
    <property type="chains" value="T=3-142"/>
</dbReference>
<dbReference type="PDB" id="7WTT">
    <property type="method" value="EM"/>
    <property type="resolution" value="3.10 A"/>
    <property type="chains" value="S=1-152"/>
</dbReference>
<dbReference type="PDB" id="7WTU">
    <property type="method" value="EM"/>
    <property type="resolution" value="3.00 A"/>
    <property type="chains" value="S=1-152"/>
</dbReference>
<dbReference type="PDB" id="7WTV">
    <property type="method" value="EM"/>
    <property type="resolution" value="3.50 A"/>
    <property type="chains" value="S=1-152"/>
</dbReference>
<dbReference type="PDB" id="7WTW">
    <property type="method" value="EM"/>
    <property type="resolution" value="3.20 A"/>
    <property type="chains" value="S=1-152"/>
</dbReference>
<dbReference type="PDB" id="7WTX">
    <property type="method" value="EM"/>
    <property type="resolution" value="3.10 A"/>
    <property type="chains" value="S=1-152"/>
</dbReference>
<dbReference type="PDB" id="7WTZ">
    <property type="method" value="EM"/>
    <property type="resolution" value="3.00 A"/>
    <property type="chains" value="S=1-152"/>
</dbReference>
<dbReference type="PDB" id="7WU0">
    <property type="method" value="EM"/>
    <property type="resolution" value="3.30 A"/>
    <property type="chains" value="S=1-152"/>
</dbReference>
<dbReference type="PDB" id="7XNX">
    <property type="method" value="EM"/>
    <property type="resolution" value="2.70 A"/>
    <property type="chains" value="SS=1-152"/>
</dbReference>
<dbReference type="PDB" id="7XNY">
    <property type="method" value="EM"/>
    <property type="resolution" value="2.50 A"/>
    <property type="chains" value="SS=1-152"/>
</dbReference>
<dbReference type="PDB" id="8G5Y">
    <property type="method" value="EM"/>
    <property type="resolution" value="2.29 A"/>
    <property type="chains" value="SS=1-152"/>
</dbReference>
<dbReference type="PDB" id="8G60">
    <property type="method" value="EM"/>
    <property type="resolution" value="2.54 A"/>
    <property type="chains" value="SS=1-152"/>
</dbReference>
<dbReference type="PDB" id="8G61">
    <property type="method" value="EM"/>
    <property type="resolution" value="2.94 A"/>
    <property type="chains" value="SS=1-152"/>
</dbReference>
<dbReference type="PDB" id="8G6J">
    <property type="method" value="EM"/>
    <property type="resolution" value="2.80 A"/>
    <property type="chains" value="SS=1-152"/>
</dbReference>
<dbReference type="PDB" id="8GLP">
    <property type="method" value="EM"/>
    <property type="resolution" value="1.67 A"/>
    <property type="chains" value="SS=1-152"/>
</dbReference>
<dbReference type="PDB" id="8IFD">
    <property type="method" value="EM"/>
    <property type="resolution" value="2.59 A"/>
    <property type="chains" value="2z=1-152"/>
</dbReference>
<dbReference type="PDB" id="8IFE">
    <property type="method" value="EM"/>
    <property type="resolution" value="2.57 A"/>
    <property type="chains" value="2z=1-152"/>
</dbReference>
<dbReference type="PDB" id="8JDJ">
    <property type="method" value="EM"/>
    <property type="resolution" value="2.50 A"/>
    <property type="chains" value="AE=1-152"/>
</dbReference>
<dbReference type="PDB" id="8JDK">
    <property type="method" value="EM"/>
    <property type="resolution" value="2.26 A"/>
    <property type="chains" value="AE=1-152"/>
</dbReference>
<dbReference type="PDB" id="8JDL">
    <property type="method" value="EM"/>
    <property type="resolution" value="2.42 A"/>
    <property type="chains" value="AE=1-152"/>
</dbReference>
<dbReference type="PDB" id="8JDM">
    <property type="method" value="EM"/>
    <property type="resolution" value="2.67 A"/>
    <property type="chains" value="AE=1-152"/>
</dbReference>
<dbReference type="PDB" id="8K2C">
    <property type="method" value="EM"/>
    <property type="resolution" value="2.40 A"/>
    <property type="chains" value="SS=1-152"/>
</dbReference>
<dbReference type="PDB" id="8OZ0">
    <property type="method" value="EM"/>
    <property type="resolution" value="3.50 A"/>
    <property type="chains" value="n=1-151"/>
</dbReference>
<dbReference type="PDB" id="8PJ1">
    <property type="method" value="EM"/>
    <property type="resolution" value="3.40 A"/>
    <property type="chains" value="f=1-152"/>
</dbReference>
<dbReference type="PDB" id="8PJ2">
    <property type="method" value="EM"/>
    <property type="resolution" value="3.40 A"/>
    <property type="chains" value="f=1-152"/>
</dbReference>
<dbReference type="PDB" id="8PJ3">
    <property type="method" value="EM"/>
    <property type="resolution" value="3.70 A"/>
    <property type="chains" value="f=1-152"/>
</dbReference>
<dbReference type="PDB" id="8PJ4">
    <property type="method" value="EM"/>
    <property type="resolution" value="3.20 A"/>
    <property type="chains" value="f=1-152"/>
</dbReference>
<dbReference type="PDB" id="8PJ5">
    <property type="method" value="EM"/>
    <property type="resolution" value="2.90 A"/>
    <property type="chains" value="f=1-152"/>
</dbReference>
<dbReference type="PDB" id="8PJ6">
    <property type="method" value="EM"/>
    <property type="resolution" value="2.90 A"/>
    <property type="chains" value="f=1-152"/>
</dbReference>
<dbReference type="PDB" id="8PPK">
    <property type="method" value="EM"/>
    <property type="resolution" value="2.98 A"/>
    <property type="chains" value="S=1-152"/>
</dbReference>
<dbReference type="PDB" id="8PPL">
    <property type="method" value="EM"/>
    <property type="resolution" value="2.65 A"/>
    <property type="chains" value="AS=1-152"/>
</dbReference>
<dbReference type="PDB" id="8QOI">
    <property type="method" value="EM"/>
    <property type="resolution" value="1.90 A"/>
    <property type="chains" value="SS=1-152"/>
</dbReference>
<dbReference type="PDB" id="8T4S">
    <property type="method" value="EM"/>
    <property type="resolution" value="2.60 A"/>
    <property type="chains" value="S=1-152"/>
</dbReference>
<dbReference type="PDB" id="8UKB">
    <property type="method" value="EM"/>
    <property type="resolution" value="3.05 A"/>
    <property type="chains" value="SS=1-145"/>
</dbReference>
<dbReference type="PDB" id="8XP2">
    <property type="method" value="EM"/>
    <property type="resolution" value="3.20 A"/>
    <property type="chains" value="SS=1-152"/>
</dbReference>
<dbReference type="PDB" id="8XP3">
    <property type="method" value="EM"/>
    <property type="resolution" value="3.40 A"/>
    <property type="chains" value="SS=1-152"/>
</dbReference>
<dbReference type="PDB" id="8XSX">
    <property type="method" value="EM"/>
    <property type="resolution" value="2.40 A"/>
    <property type="chains" value="SS=1-152"/>
</dbReference>
<dbReference type="PDB" id="8XSY">
    <property type="method" value="EM"/>
    <property type="resolution" value="3.00 A"/>
    <property type="chains" value="SS=1-152"/>
</dbReference>
<dbReference type="PDB" id="8XSZ">
    <property type="method" value="EM"/>
    <property type="resolution" value="3.20 A"/>
    <property type="chains" value="SS=1-152"/>
</dbReference>
<dbReference type="PDB" id="8XXL">
    <property type="method" value="EM"/>
    <property type="resolution" value="2.90 A"/>
    <property type="chains" value="SS=1-152"/>
</dbReference>
<dbReference type="PDB" id="8XXM">
    <property type="method" value="EM"/>
    <property type="resolution" value="3.20 A"/>
    <property type="chains" value="SS=1-152"/>
</dbReference>
<dbReference type="PDB" id="8XXN">
    <property type="method" value="EM"/>
    <property type="resolution" value="3.60 A"/>
    <property type="chains" value="SS=1-152"/>
</dbReference>
<dbReference type="PDB" id="8Y0W">
    <property type="method" value="EM"/>
    <property type="resolution" value="3.40 A"/>
    <property type="chains" value="SS=1-152"/>
</dbReference>
<dbReference type="PDB" id="8Y0X">
    <property type="method" value="EM"/>
    <property type="resolution" value="3.30 A"/>
    <property type="chains" value="SS=1-152"/>
</dbReference>
<dbReference type="PDB" id="8YOO">
    <property type="method" value="EM"/>
    <property type="resolution" value="2.00 A"/>
    <property type="chains" value="SS=1-152"/>
</dbReference>
<dbReference type="PDB" id="8YOP">
    <property type="method" value="EM"/>
    <property type="resolution" value="2.20 A"/>
    <property type="chains" value="SS=1-152"/>
</dbReference>
<dbReference type="PDB" id="8ZDB">
    <property type="method" value="EM"/>
    <property type="resolution" value="3.60 A"/>
    <property type="chains" value="S=1-152"/>
</dbReference>
<dbReference type="PDB" id="8ZDC">
    <property type="method" value="EM"/>
    <property type="resolution" value="3.80 A"/>
    <property type="chains" value="S=1-152"/>
</dbReference>
<dbReference type="PDB" id="8ZDD">
    <property type="method" value="EM"/>
    <property type="resolution" value="3.70 A"/>
    <property type="chains" value="S=1-152"/>
</dbReference>
<dbReference type="PDB" id="9BKD">
    <property type="method" value="EM"/>
    <property type="resolution" value="2.60 A"/>
    <property type="chains" value="f=1-152"/>
</dbReference>
<dbReference type="PDB" id="9BLN">
    <property type="method" value="EM"/>
    <property type="resolution" value="3.90 A"/>
    <property type="chains" value="f=1-152"/>
</dbReference>
<dbReference type="PDB" id="9C3H">
    <property type="method" value="EM"/>
    <property type="resolution" value="2.00 A"/>
    <property type="chains" value="ST=1-152"/>
</dbReference>
<dbReference type="PDB" id="9G8M">
    <property type="method" value="EM"/>
    <property type="resolution" value="3.30 A"/>
    <property type="chains" value="SS=1-152"/>
</dbReference>
<dbReference type="PDB" id="9G8O">
    <property type="method" value="EM"/>
    <property type="resolution" value="3.40 A"/>
    <property type="chains" value="SS=1-152"/>
</dbReference>
<dbReference type="PDBsum" id="4UG0"/>
<dbReference type="PDBsum" id="4V6X"/>
<dbReference type="PDBsum" id="5A2Q"/>
<dbReference type="PDBsum" id="5AJ0"/>
<dbReference type="PDBsum" id="5FLX"/>
<dbReference type="PDBsum" id="5LKS"/>
<dbReference type="PDBsum" id="5OA3"/>
<dbReference type="PDBsum" id="5T2C"/>
<dbReference type="PDBsum" id="5VYC"/>
<dbReference type="PDBsum" id="6FEC"/>
<dbReference type="PDBsum" id="6G18"/>
<dbReference type="PDBsum" id="6G4S"/>
<dbReference type="PDBsum" id="6G4W"/>
<dbReference type="PDBsum" id="6G51"/>
<dbReference type="PDBsum" id="6G53"/>
<dbReference type="PDBsum" id="6G5H"/>
<dbReference type="PDBsum" id="6G5I"/>
<dbReference type="PDBsum" id="6IP5"/>
<dbReference type="PDBsum" id="6IP6"/>
<dbReference type="PDBsum" id="6IP8"/>
<dbReference type="PDBsum" id="6OLE"/>
<dbReference type="PDBsum" id="6OLF"/>
<dbReference type="PDBsum" id="6OLG"/>
<dbReference type="PDBsum" id="6OLI"/>
<dbReference type="PDBsum" id="6OLZ"/>
<dbReference type="PDBsum" id="6OM0"/>
<dbReference type="PDBsum" id="6OM7"/>
<dbReference type="PDBsum" id="6QZP"/>
<dbReference type="PDBsum" id="6XA1"/>
<dbReference type="PDBsum" id="6Y0G"/>
<dbReference type="PDBsum" id="6Y2L"/>
<dbReference type="PDBsum" id="6Y57"/>
<dbReference type="PDBsum" id="6YBS"/>
<dbReference type="PDBsum" id="6Z6L"/>
<dbReference type="PDBsum" id="6Z6M"/>
<dbReference type="PDBsum" id="6Z6N"/>
<dbReference type="PDBsum" id="6ZLW"/>
<dbReference type="PDBsum" id="6ZM7"/>
<dbReference type="PDBsum" id="6ZME"/>
<dbReference type="PDBsum" id="6ZMI"/>
<dbReference type="PDBsum" id="6ZMO"/>
<dbReference type="PDBsum" id="6ZMT"/>
<dbReference type="PDBsum" id="6ZMW"/>
<dbReference type="PDBsum" id="6ZN5"/>
<dbReference type="PDBsum" id="6ZOJ"/>
<dbReference type="PDBsum" id="6ZOL"/>
<dbReference type="PDBsum" id="6ZON"/>
<dbReference type="PDBsum" id="6ZP4"/>
<dbReference type="PDBsum" id="6ZUO"/>
<dbReference type="PDBsum" id="6ZV6"/>
<dbReference type="PDBsum" id="6ZVH"/>
<dbReference type="PDBsum" id="6ZVJ"/>
<dbReference type="PDBsum" id="6ZXD"/>
<dbReference type="PDBsum" id="6ZXE"/>
<dbReference type="PDBsum" id="6ZXF"/>
<dbReference type="PDBsum" id="6ZXG"/>
<dbReference type="PDBsum" id="6ZXH"/>
<dbReference type="PDBsum" id="7A09"/>
<dbReference type="PDBsum" id="7K5I"/>
<dbReference type="PDBsum" id="7QP6"/>
<dbReference type="PDBsum" id="7QP7"/>
<dbReference type="PDBsum" id="7R4X"/>
<dbReference type="PDBsum" id="7TQL"/>
<dbReference type="PDBsum" id="7WTT"/>
<dbReference type="PDBsum" id="7WTU"/>
<dbReference type="PDBsum" id="7WTV"/>
<dbReference type="PDBsum" id="7WTW"/>
<dbReference type="PDBsum" id="7WTX"/>
<dbReference type="PDBsum" id="7WTZ"/>
<dbReference type="PDBsum" id="7WU0"/>
<dbReference type="PDBsum" id="7XNX"/>
<dbReference type="PDBsum" id="7XNY"/>
<dbReference type="PDBsum" id="8G5Y"/>
<dbReference type="PDBsum" id="8G60"/>
<dbReference type="PDBsum" id="8G61"/>
<dbReference type="PDBsum" id="8G6J"/>
<dbReference type="PDBsum" id="8GLP"/>
<dbReference type="PDBsum" id="8IFD"/>
<dbReference type="PDBsum" id="8IFE"/>
<dbReference type="PDBsum" id="8JDJ"/>
<dbReference type="PDBsum" id="8JDK"/>
<dbReference type="PDBsum" id="8JDL"/>
<dbReference type="PDBsum" id="8JDM"/>
<dbReference type="PDBsum" id="8K2C"/>
<dbReference type="PDBsum" id="8OZ0"/>
<dbReference type="PDBsum" id="8PJ1"/>
<dbReference type="PDBsum" id="8PJ2"/>
<dbReference type="PDBsum" id="8PJ3"/>
<dbReference type="PDBsum" id="8PJ4"/>
<dbReference type="PDBsum" id="8PJ5"/>
<dbReference type="PDBsum" id="8PJ6"/>
<dbReference type="PDBsum" id="8PPK"/>
<dbReference type="PDBsum" id="8PPL"/>
<dbReference type="PDBsum" id="8QOI"/>
<dbReference type="PDBsum" id="8T4S"/>
<dbReference type="PDBsum" id="8UKB"/>
<dbReference type="PDBsum" id="8XP2"/>
<dbReference type="PDBsum" id="8XP3"/>
<dbReference type="PDBsum" id="8XSX"/>
<dbReference type="PDBsum" id="8XSY"/>
<dbReference type="PDBsum" id="8XSZ"/>
<dbReference type="PDBsum" id="8XXL"/>
<dbReference type="PDBsum" id="8XXM"/>
<dbReference type="PDBsum" id="8XXN"/>
<dbReference type="PDBsum" id="8Y0W"/>
<dbReference type="PDBsum" id="8Y0X"/>
<dbReference type="PDBsum" id="8YOO"/>
<dbReference type="PDBsum" id="8YOP"/>
<dbReference type="PDBsum" id="8ZDB"/>
<dbReference type="PDBsum" id="8ZDC"/>
<dbReference type="PDBsum" id="8ZDD"/>
<dbReference type="PDBsum" id="9BKD"/>
<dbReference type="PDBsum" id="9BLN"/>
<dbReference type="PDBsum" id="9C3H"/>
<dbReference type="PDBsum" id="9G8M"/>
<dbReference type="PDBsum" id="9G8O"/>
<dbReference type="EMDB" id="EMD-10668"/>
<dbReference type="EMDB" id="EMD-10674"/>
<dbReference type="EMDB" id="EMD-10690"/>
<dbReference type="EMDB" id="EMD-10772"/>
<dbReference type="EMDB" id="EMD-11098"/>
<dbReference type="EMDB" id="EMD-11099"/>
<dbReference type="EMDB" id="EMD-11100"/>
<dbReference type="EMDB" id="EMD-11276"/>
<dbReference type="EMDB" id="EMD-11288"/>
<dbReference type="EMDB" id="EMD-11289"/>
<dbReference type="EMDB" id="EMD-11292"/>
<dbReference type="EMDB" id="EMD-11299"/>
<dbReference type="EMDB" id="EMD-11301"/>
<dbReference type="EMDB" id="EMD-11302"/>
<dbReference type="EMDB" id="EMD-11310"/>
<dbReference type="EMDB" id="EMD-11320"/>
<dbReference type="EMDB" id="EMD-11322"/>
<dbReference type="EMDB" id="EMD-11325"/>
<dbReference type="EMDB" id="EMD-11335"/>
<dbReference type="EMDB" id="EMD-11440"/>
<dbReference type="EMDB" id="EMD-11441"/>
<dbReference type="EMDB" id="EMD-11456"/>
<dbReference type="EMDB" id="EMD-11458"/>
<dbReference type="EMDB" id="EMD-11517"/>
<dbReference type="EMDB" id="EMD-11518"/>
<dbReference type="EMDB" id="EMD-11519"/>
<dbReference type="EMDB" id="EMD-11520"/>
<dbReference type="EMDB" id="EMD-11521"/>
<dbReference type="EMDB" id="EMD-11602"/>
<dbReference type="EMDB" id="EMD-14113"/>
<dbReference type="EMDB" id="EMD-14114"/>
<dbReference type="EMDB" id="EMD-14317"/>
<dbReference type="EMDB" id="EMD-17297"/>
<dbReference type="EMDB" id="EMD-17696"/>
<dbReference type="EMDB" id="EMD-17697"/>
<dbReference type="EMDB" id="EMD-17698"/>
<dbReference type="EMDB" id="EMD-17699"/>
<dbReference type="EMDB" id="EMD-17700"/>
<dbReference type="EMDB" id="EMD-17701"/>
<dbReference type="EMDB" id="EMD-17804"/>
<dbReference type="EMDB" id="EMD-17805"/>
<dbReference type="EMDB" id="EMD-18539"/>
<dbReference type="EMDB" id="EMD-22681"/>
<dbReference type="EMDB" id="EMD-26067"/>
<dbReference type="EMDB" id="EMD-29757"/>
<dbReference type="EMDB" id="EMD-29758"/>
<dbReference type="EMDB" id="EMD-29759"/>
<dbReference type="EMDB" id="EMD-29760"/>
<dbReference type="EMDB" id="EMD-29771"/>
<dbReference type="EMDB" id="EMD-32800"/>
<dbReference type="EMDB" id="EMD-32801"/>
<dbReference type="EMDB" id="EMD-32802"/>
<dbReference type="EMDB" id="EMD-32803"/>
<dbReference type="EMDB" id="EMD-32804"/>
<dbReference type="EMDB" id="EMD-32806"/>
<dbReference type="EMDB" id="EMD-32807"/>
<dbReference type="EMDB" id="EMD-33329"/>
<dbReference type="EMDB" id="EMD-33330"/>
<dbReference type="EMDB" id="EMD-35413"/>
<dbReference type="EMDB" id="EMD-35414"/>
<dbReference type="EMDB" id="EMD-36178"/>
<dbReference type="EMDB" id="EMD-36179"/>
<dbReference type="EMDB" id="EMD-36180"/>
<dbReference type="EMDB" id="EMD-36181"/>
<dbReference type="EMDB" id="EMD-36838"/>
<dbReference type="EMDB" id="EMD-3770"/>
<dbReference type="EMDB" id="EMD-38548"/>
<dbReference type="EMDB" id="EMD-38549"/>
<dbReference type="EMDB" id="EMD-38629"/>
<dbReference type="EMDB" id="EMD-38630"/>
<dbReference type="EMDB" id="EMD-38631"/>
<dbReference type="EMDB" id="EMD-38752"/>
<dbReference type="EMDB" id="EMD-38753"/>
<dbReference type="EMDB" id="EMD-38754"/>
<dbReference type="EMDB" id="EMD-3883"/>
<dbReference type="EMDB" id="EMD-39455"/>
<dbReference type="EMDB" id="EMD-39456"/>
<dbReference type="EMDB" id="EMD-39956"/>
<dbReference type="EMDB" id="EMD-39957"/>
<dbReference type="EMDB" id="EMD-39958"/>
<dbReference type="EMDB" id="EMD-40205"/>
<dbReference type="EMDB" id="EMD-4070"/>
<dbReference type="EMDB" id="EMD-41039"/>
<dbReference type="EMDB" id="EMD-42351"/>
<dbReference type="EMDB" id="EMD-4242"/>
<dbReference type="EMDB" id="EMD-4337"/>
<dbReference type="EMDB" id="EMD-4348"/>
<dbReference type="EMDB" id="EMD-4349"/>
<dbReference type="EMDB" id="EMD-4350"/>
<dbReference type="EMDB" id="EMD-4351"/>
<dbReference type="EMDB" id="EMD-4352"/>
<dbReference type="EMDB" id="EMD-4353"/>
<dbReference type="EMDB" id="EMD-44641"/>
<dbReference type="EMDB" id="EMD-44671"/>
<dbReference type="EMDB" id="EMD-45170"/>
<dbReference type="EMDB" id="EMD-51132"/>
<dbReference type="EMDB" id="EMD-51134"/>
<dbReference type="EMDB" id="EMD-9701"/>
<dbReference type="EMDB" id="EMD-9702"/>
<dbReference type="EMDB" id="EMD-9703"/>
<dbReference type="SMR" id="P62269"/>
<dbReference type="BioGRID" id="112136">
    <property type="interactions" value="438"/>
</dbReference>
<dbReference type="ComplexPortal" id="CPX-5223">
    <property type="entry name" value="40S cytosolic small ribosomal subunit"/>
</dbReference>
<dbReference type="CORUM" id="P62269"/>
<dbReference type="DIP" id="DIP-32892N"/>
<dbReference type="FunCoup" id="P62269">
    <property type="interactions" value="2045"/>
</dbReference>
<dbReference type="IntAct" id="P62269">
    <property type="interactions" value="164"/>
</dbReference>
<dbReference type="MINT" id="P62269"/>
<dbReference type="STRING" id="9606.ENSP00000393241"/>
<dbReference type="DrugBank" id="DB11638">
    <property type="generic name" value="Artenimol"/>
</dbReference>
<dbReference type="GlyGen" id="P62269">
    <property type="glycosylation" value="1 site, 1 O-linked glycan (1 site)"/>
</dbReference>
<dbReference type="iPTMnet" id="P62269"/>
<dbReference type="MetOSite" id="P62269"/>
<dbReference type="PhosphoSitePlus" id="P62269"/>
<dbReference type="SwissPalm" id="P62269"/>
<dbReference type="BioMuta" id="RPS18"/>
<dbReference type="DMDM" id="50403625"/>
<dbReference type="jPOST" id="P62269"/>
<dbReference type="MassIVE" id="P62269"/>
<dbReference type="PaxDb" id="9606-ENSP00000393241"/>
<dbReference type="PeptideAtlas" id="P62269"/>
<dbReference type="ProteomicsDB" id="57381"/>
<dbReference type="Pumba" id="P62269"/>
<dbReference type="TopDownProteomics" id="P62269"/>
<dbReference type="Antibodypedia" id="53237">
    <property type="antibodies" value="183 antibodies from 26 providers"/>
</dbReference>
<dbReference type="DNASU" id="6222"/>
<dbReference type="Ensembl" id="ENST00000211372.9">
    <property type="protein sequence ID" value="ENSP00000211372.5"/>
    <property type="gene ID" value="ENSG00000096150.9"/>
</dbReference>
<dbReference type="Ensembl" id="ENST00000434122.2">
    <property type="protein sequence ID" value="ENSP00000403175.2"/>
    <property type="gene ID" value="ENSG00000226225.6"/>
</dbReference>
<dbReference type="Ensembl" id="ENST00000439602.7">
    <property type="protein sequence ID" value="ENSP00000393241.2"/>
    <property type="gene ID" value="ENSG00000231500.7"/>
</dbReference>
<dbReference type="Ensembl" id="ENST00000454021.6">
    <property type="protein sequence ID" value="ENSP00000416110.2"/>
    <property type="gene ID" value="ENSG00000235650.6"/>
</dbReference>
<dbReference type="Ensembl" id="ENST00000457341.6">
    <property type="protein sequence ID" value="ENSP00000412583.2"/>
    <property type="gene ID" value="ENSG00000223367.6"/>
</dbReference>
<dbReference type="GeneID" id="6222"/>
<dbReference type="KEGG" id="hsa:6222"/>
<dbReference type="MANE-Select" id="ENST00000439602.7">
    <property type="protein sequence ID" value="ENSP00000393241.2"/>
    <property type="RefSeq nucleotide sequence ID" value="NM_022551.3"/>
    <property type="RefSeq protein sequence ID" value="NP_072045.1"/>
</dbReference>
<dbReference type="UCSC" id="uc003odp.2">
    <property type="organism name" value="human"/>
</dbReference>
<dbReference type="AGR" id="HGNC:10401"/>
<dbReference type="CTD" id="6222"/>
<dbReference type="DisGeNET" id="6222"/>
<dbReference type="GeneCards" id="RPS18"/>
<dbReference type="HGNC" id="HGNC:10401">
    <property type="gene designation" value="RPS18"/>
</dbReference>
<dbReference type="HPA" id="ENSG00000231500">
    <property type="expression patterns" value="Low tissue specificity"/>
</dbReference>
<dbReference type="MIM" id="180473">
    <property type="type" value="gene"/>
</dbReference>
<dbReference type="neXtProt" id="NX_P62269"/>
<dbReference type="OpenTargets" id="ENSG00000231500"/>
<dbReference type="PharmGKB" id="PA34801"/>
<dbReference type="VEuPathDB" id="HostDB:ENSG00000231500"/>
<dbReference type="eggNOG" id="KOG3311">
    <property type="taxonomic scope" value="Eukaryota"/>
</dbReference>
<dbReference type="GeneTree" id="ENSGT00390000012691"/>
<dbReference type="HOGENOM" id="CLU_103849_0_1_1"/>
<dbReference type="InParanoid" id="P62269"/>
<dbReference type="OMA" id="SYKGVRH"/>
<dbReference type="OrthoDB" id="9527730at2759"/>
<dbReference type="PAN-GO" id="P62269">
    <property type="GO annotations" value="2 GO annotations based on evolutionary models"/>
</dbReference>
<dbReference type="PhylomeDB" id="P62269"/>
<dbReference type="TreeFam" id="TF317649"/>
<dbReference type="PathwayCommons" id="P62269"/>
<dbReference type="Reactome" id="R-HSA-156827">
    <property type="pathway name" value="L13a-mediated translational silencing of Ceruloplasmin expression"/>
</dbReference>
<dbReference type="Reactome" id="R-HSA-156902">
    <property type="pathway name" value="Peptide chain elongation"/>
</dbReference>
<dbReference type="Reactome" id="R-HSA-1799339">
    <property type="pathway name" value="SRP-dependent cotranslational protein targeting to membrane"/>
</dbReference>
<dbReference type="Reactome" id="R-HSA-192823">
    <property type="pathway name" value="Viral mRNA Translation"/>
</dbReference>
<dbReference type="Reactome" id="R-HSA-2408557">
    <property type="pathway name" value="Selenocysteine synthesis"/>
</dbReference>
<dbReference type="Reactome" id="R-HSA-6791226">
    <property type="pathway name" value="Major pathway of rRNA processing in the nucleolus and cytosol"/>
</dbReference>
<dbReference type="Reactome" id="R-HSA-72649">
    <property type="pathway name" value="Translation initiation complex formation"/>
</dbReference>
<dbReference type="Reactome" id="R-HSA-72689">
    <property type="pathway name" value="Formation of a pool of free 40S subunits"/>
</dbReference>
<dbReference type="Reactome" id="R-HSA-72695">
    <property type="pathway name" value="Formation of the ternary complex, and subsequently, the 43S complex"/>
</dbReference>
<dbReference type="Reactome" id="R-HSA-72702">
    <property type="pathway name" value="Ribosomal scanning and start codon recognition"/>
</dbReference>
<dbReference type="Reactome" id="R-HSA-72706">
    <property type="pathway name" value="GTP hydrolysis and joining of the 60S ribosomal subunit"/>
</dbReference>
<dbReference type="Reactome" id="R-HSA-72764">
    <property type="pathway name" value="Eukaryotic Translation Termination"/>
</dbReference>
<dbReference type="Reactome" id="R-HSA-9010553">
    <property type="pathway name" value="Regulation of expression of SLITs and ROBOs"/>
</dbReference>
<dbReference type="Reactome" id="R-HSA-9633012">
    <property type="pathway name" value="Response of EIF2AK4 (GCN2) to amino acid deficiency"/>
</dbReference>
<dbReference type="Reactome" id="R-HSA-9735869">
    <property type="pathway name" value="SARS-CoV-1 modulates host translation machinery"/>
</dbReference>
<dbReference type="Reactome" id="R-HSA-9754678">
    <property type="pathway name" value="SARS-CoV-2 modulates host translation machinery"/>
</dbReference>
<dbReference type="Reactome" id="R-HSA-975956">
    <property type="pathway name" value="Nonsense Mediated Decay (NMD) independent of the Exon Junction Complex (EJC)"/>
</dbReference>
<dbReference type="Reactome" id="R-HSA-975957">
    <property type="pathway name" value="Nonsense Mediated Decay (NMD) enhanced by the Exon Junction Complex (EJC)"/>
</dbReference>
<dbReference type="SignaLink" id="P62269"/>
<dbReference type="SIGNOR" id="P62269"/>
<dbReference type="BioGRID-ORCS" id="6222">
    <property type="hits" value="860 hits in 1130 CRISPR screens"/>
</dbReference>
<dbReference type="CD-CODE" id="232F8A39">
    <property type="entry name" value="P-body"/>
</dbReference>
<dbReference type="CD-CODE" id="91857CE7">
    <property type="entry name" value="Nucleolus"/>
</dbReference>
<dbReference type="CD-CODE" id="DEE660B4">
    <property type="entry name" value="Stress granule"/>
</dbReference>
<dbReference type="ChiTaRS" id="RPS18">
    <property type="organism name" value="human"/>
</dbReference>
<dbReference type="EvolutionaryTrace" id="P62269"/>
<dbReference type="GeneWiki" id="RPS18"/>
<dbReference type="GenomeRNAi" id="6222"/>
<dbReference type="Pharos" id="P62269">
    <property type="development level" value="Tbio"/>
</dbReference>
<dbReference type="PRO" id="PR:P62269"/>
<dbReference type="Proteomes" id="UP000005640">
    <property type="component" value="Chromosome 6"/>
</dbReference>
<dbReference type="RNAct" id="P62269">
    <property type="molecule type" value="protein"/>
</dbReference>
<dbReference type="Bgee" id="ENSG00000096150">
    <property type="expression patterns" value="Expressed in material anatomical entity and 45 other cell types or tissues"/>
</dbReference>
<dbReference type="ExpressionAtlas" id="P62269">
    <property type="expression patterns" value="baseline and differential"/>
</dbReference>
<dbReference type="GO" id="GO:0005737">
    <property type="term" value="C:cytoplasm"/>
    <property type="evidence" value="ECO:0000303"/>
    <property type="project" value="ComplexPortal"/>
</dbReference>
<dbReference type="GO" id="GO:0005829">
    <property type="term" value="C:cytosol"/>
    <property type="evidence" value="ECO:0000314"/>
    <property type="project" value="HPA"/>
</dbReference>
<dbReference type="GO" id="GO:0022626">
    <property type="term" value="C:cytosolic ribosome"/>
    <property type="evidence" value="ECO:0000314"/>
    <property type="project" value="FlyBase"/>
</dbReference>
<dbReference type="GO" id="GO:0022627">
    <property type="term" value="C:cytosolic small ribosomal subunit"/>
    <property type="evidence" value="ECO:0000314"/>
    <property type="project" value="UniProtKB"/>
</dbReference>
<dbReference type="GO" id="GO:0070062">
    <property type="term" value="C:extracellular exosome"/>
    <property type="evidence" value="ECO:0007005"/>
    <property type="project" value="UniProtKB"/>
</dbReference>
<dbReference type="GO" id="GO:0005925">
    <property type="term" value="C:focal adhesion"/>
    <property type="evidence" value="ECO:0007005"/>
    <property type="project" value="UniProtKB"/>
</dbReference>
<dbReference type="GO" id="GO:0016020">
    <property type="term" value="C:membrane"/>
    <property type="evidence" value="ECO:0007005"/>
    <property type="project" value="UniProtKB"/>
</dbReference>
<dbReference type="GO" id="GO:0005654">
    <property type="term" value="C:nucleoplasm"/>
    <property type="evidence" value="ECO:0000304"/>
    <property type="project" value="Reactome"/>
</dbReference>
<dbReference type="GO" id="GO:0005634">
    <property type="term" value="C:nucleus"/>
    <property type="evidence" value="ECO:0000314"/>
    <property type="project" value="UniProtKB"/>
</dbReference>
<dbReference type="GO" id="GO:0014069">
    <property type="term" value="C:postsynaptic density"/>
    <property type="evidence" value="ECO:0000314"/>
    <property type="project" value="SynGO"/>
</dbReference>
<dbReference type="GO" id="GO:0005840">
    <property type="term" value="C:ribosome"/>
    <property type="evidence" value="ECO:0000303"/>
    <property type="project" value="UniProtKB"/>
</dbReference>
<dbReference type="GO" id="GO:0015935">
    <property type="term" value="C:small ribosomal subunit"/>
    <property type="evidence" value="ECO:0007005"/>
    <property type="project" value="UniProtKB"/>
</dbReference>
<dbReference type="GO" id="GO:0003723">
    <property type="term" value="F:RNA binding"/>
    <property type="evidence" value="ECO:0007005"/>
    <property type="project" value="UniProtKB"/>
</dbReference>
<dbReference type="GO" id="GO:0019843">
    <property type="term" value="F:rRNA binding"/>
    <property type="evidence" value="ECO:0007669"/>
    <property type="project" value="UniProtKB-KW"/>
</dbReference>
<dbReference type="GO" id="GO:0003735">
    <property type="term" value="F:structural constituent of ribosome"/>
    <property type="evidence" value="ECO:0000314"/>
    <property type="project" value="FlyBase"/>
</dbReference>
<dbReference type="GO" id="GO:0002181">
    <property type="term" value="P:cytoplasmic translation"/>
    <property type="evidence" value="ECO:0000303"/>
    <property type="project" value="ComplexPortal"/>
</dbReference>
<dbReference type="GO" id="GO:0006412">
    <property type="term" value="P:translation"/>
    <property type="evidence" value="ECO:0000305"/>
    <property type="project" value="UniProtKB"/>
</dbReference>
<dbReference type="FunFam" id="1.10.8.50:FF:000002">
    <property type="entry name" value="40S ribosomal protein S18"/>
    <property type="match status" value="1"/>
</dbReference>
<dbReference type="FunFam" id="4.10.910.10:FF:000002">
    <property type="entry name" value="40S ribosomal protein S18"/>
    <property type="match status" value="1"/>
</dbReference>
<dbReference type="Gene3D" id="1.10.8.50">
    <property type="match status" value="1"/>
</dbReference>
<dbReference type="Gene3D" id="4.10.910.10">
    <property type="entry name" value="30s ribosomal protein s13, domain 2"/>
    <property type="match status" value="1"/>
</dbReference>
<dbReference type="HAMAP" id="MF_01315">
    <property type="entry name" value="Ribosomal_uS13"/>
    <property type="match status" value="1"/>
</dbReference>
<dbReference type="InterPro" id="IPR027437">
    <property type="entry name" value="Rbsml_uS13_C"/>
</dbReference>
<dbReference type="InterPro" id="IPR001892">
    <property type="entry name" value="Ribosomal_uS13"/>
</dbReference>
<dbReference type="InterPro" id="IPR010979">
    <property type="entry name" value="Ribosomal_uS13-like_H2TH"/>
</dbReference>
<dbReference type="InterPro" id="IPR018269">
    <property type="entry name" value="Ribosomal_uS13_CS"/>
</dbReference>
<dbReference type="NCBIfam" id="NF003140">
    <property type="entry name" value="PRK04053.1"/>
    <property type="match status" value="1"/>
</dbReference>
<dbReference type="PANTHER" id="PTHR10871">
    <property type="entry name" value="30S RIBOSOMAL PROTEIN S13/40S RIBOSOMAL PROTEIN S18"/>
    <property type="match status" value="1"/>
</dbReference>
<dbReference type="PANTHER" id="PTHR10871:SF42">
    <property type="entry name" value="SMALL RIBOSOMAL SUBUNIT PROTEIN US13"/>
    <property type="match status" value="1"/>
</dbReference>
<dbReference type="Pfam" id="PF00416">
    <property type="entry name" value="Ribosomal_S13"/>
    <property type="match status" value="1"/>
</dbReference>
<dbReference type="PIRSF" id="PIRSF002134">
    <property type="entry name" value="Ribosomal_S13"/>
    <property type="match status" value="1"/>
</dbReference>
<dbReference type="SUPFAM" id="SSF46946">
    <property type="entry name" value="S13-like H2TH domain"/>
    <property type="match status" value="1"/>
</dbReference>
<dbReference type="PROSITE" id="PS00646">
    <property type="entry name" value="RIBOSOMAL_S13_1"/>
    <property type="match status" value="1"/>
</dbReference>
<dbReference type="PROSITE" id="PS50159">
    <property type="entry name" value="RIBOSOMAL_S13_2"/>
    <property type="match status" value="1"/>
</dbReference>
<evidence type="ECO:0000269" key="1">
    <source>
    </source>
</evidence>
<evidence type="ECO:0000269" key="2">
    <source ref="5"/>
</evidence>
<evidence type="ECO:0000303" key="3">
    <source>
    </source>
</evidence>
<evidence type="ECO:0000305" key="4"/>
<evidence type="ECO:0007744" key="5">
    <source>
    </source>
</evidence>
<evidence type="ECO:0007744" key="6">
    <source>
    </source>
</evidence>
<evidence type="ECO:0007744" key="7">
    <source>
    </source>
</evidence>
<evidence type="ECO:0007744" key="8">
    <source>
    </source>
</evidence>
<evidence type="ECO:0007744" key="9">
    <source>
    </source>
</evidence>
<evidence type="ECO:0007829" key="10">
    <source>
        <dbReference type="PDB" id="6YBS"/>
    </source>
</evidence>
<evidence type="ECO:0007829" key="11">
    <source>
        <dbReference type="PDB" id="6ZLW"/>
    </source>
</evidence>
<evidence type="ECO:0007829" key="12">
    <source>
        <dbReference type="PDB" id="6ZMT"/>
    </source>
</evidence>
<evidence type="ECO:0007829" key="13">
    <source>
        <dbReference type="PDB" id="6ZN5"/>
    </source>
</evidence>
<evidence type="ECO:0007829" key="14">
    <source>
        <dbReference type="PDB" id="6ZOJ"/>
    </source>
</evidence>
<evidence type="ECO:0007829" key="15">
    <source>
        <dbReference type="PDB" id="7R4X"/>
    </source>
</evidence>
<evidence type="ECO:0007829" key="16">
    <source>
        <dbReference type="PDB" id="8PPK"/>
    </source>
</evidence>
<evidence type="ECO:0007829" key="17">
    <source>
        <dbReference type="PDB" id="8T4S"/>
    </source>
</evidence>
<keyword id="KW-0002">3D-structure</keyword>
<keyword id="KW-0007">Acetylation</keyword>
<keyword id="KW-0963">Cytoplasm</keyword>
<keyword id="KW-0903">Direct protein sequencing</keyword>
<keyword id="KW-1017">Isopeptide bond</keyword>
<keyword id="KW-1267">Proteomics identification</keyword>
<keyword id="KW-1185">Reference proteome</keyword>
<keyword id="KW-0687">Ribonucleoprotein</keyword>
<keyword id="KW-0689">Ribosomal protein</keyword>
<keyword id="KW-0694">RNA-binding</keyword>
<keyword id="KW-0699">rRNA-binding</keyword>
<keyword id="KW-0832">Ubl conjugation</keyword>
<accession>P62269</accession>
<accession>P25232</accession>
<accession>Q5SUJ3</accession>
<accession>Q6IPF8</accession>
<organism>
    <name type="scientific">Homo sapiens</name>
    <name type="common">Human</name>
    <dbReference type="NCBI Taxonomy" id="9606"/>
    <lineage>
        <taxon>Eukaryota</taxon>
        <taxon>Metazoa</taxon>
        <taxon>Chordata</taxon>
        <taxon>Craniata</taxon>
        <taxon>Vertebrata</taxon>
        <taxon>Euteleostomi</taxon>
        <taxon>Mammalia</taxon>
        <taxon>Eutheria</taxon>
        <taxon>Euarchontoglires</taxon>
        <taxon>Primates</taxon>
        <taxon>Haplorrhini</taxon>
        <taxon>Catarrhini</taxon>
        <taxon>Hominidae</taxon>
        <taxon>Homo</taxon>
    </lineage>
</organism>
<feature type="initiator methionine" description="Removed" evidence="2 5 7 8">
    <location>
        <position position="1"/>
    </location>
</feature>
<feature type="chain" id="PRO_0000132212" description="Small ribosomal subunit protein uS13">
    <location>
        <begin position="2"/>
        <end position="152"/>
    </location>
</feature>
<feature type="modified residue" description="N-acetylserine" evidence="2 5 7 8">
    <location>
        <position position="2"/>
    </location>
</feature>
<feature type="modified residue" description="N6-acetyllysine; alternate" evidence="6">
    <location>
        <position position="94"/>
    </location>
</feature>
<feature type="modified residue" description="N6-acetyllysine; alternate" evidence="6">
    <location>
        <position position="106"/>
    </location>
</feature>
<feature type="cross-link" description="Glycyl lysine isopeptide (Lys-Gly) (interchain with G-Cter in SUMO2)" evidence="9">
    <location>
        <position position="91"/>
    </location>
</feature>
<feature type="cross-link" description="Glycyl lysine isopeptide (Lys-Gly) (interchain with G-Cter in SUMO2); alternate" evidence="9">
    <location>
        <position position="94"/>
    </location>
</feature>
<feature type="cross-link" description="Glycyl lysine isopeptide (Lys-Gly) (interchain with G-Cter in SUMO2); alternate" evidence="9">
    <location>
        <position position="106"/>
    </location>
</feature>
<feature type="sequence conflict" description="In Ref. 6; AA sequence." evidence="4" ref="6">
    <original>R</original>
    <variation>S</variation>
    <location>
        <position position="55"/>
    </location>
</feature>
<feature type="turn" evidence="17">
    <location>
        <begin position="6"/>
        <end position="8"/>
    </location>
</feature>
<feature type="strand" evidence="15">
    <location>
        <begin position="11"/>
        <end position="15"/>
    </location>
</feature>
<feature type="strand" evidence="15">
    <location>
        <begin position="18"/>
        <end position="21"/>
    </location>
</feature>
<feature type="strand" evidence="13">
    <location>
        <begin position="22"/>
        <end position="25"/>
    </location>
</feature>
<feature type="helix" evidence="15">
    <location>
        <begin position="26"/>
        <end position="29"/>
    </location>
</feature>
<feature type="helix" evidence="15">
    <location>
        <begin position="30"/>
        <end position="32"/>
    </location>
</feature>
<feature type="strand" evidence="12">
    <location>
        <begin position="33"/>
        <end position="35"/>
    </location>
</feature>
<feature type="helix" evidence="15">
    <location>
        <begin position="38"/>
        <end position="47"/>
    </location>
</feature>
<feature type="strand" evidence="10">
    <location>
        <begin position="52"/>
        <end position="55"/>
    </location>
</feature>
<feature type="helix" evidence="15">
    <location>
        <begin position="56"/>
        <end position="58"/>
    </location>
</feature>
<feature type="helix" evidence="15">
    <location>
        <begin position="61"/>
        <end position="72"/>
    </location>
</feature>
<feature type="helix" evidence="15">
    <location>
        <begin position="74"/>
        <end position="77"/>
    </location>
</feature>
<feature type="helix" evidence="15">
    <location>
        <begin position="81"/>
        <end position="83"/>
    </location>
</feature>
<feature type="strand" evidence="11">
    <location>
        <begin position="85"/>
        <end position="88"/>
    </location>
</feature>
<feature type="turn" evidence="15">
    <location>
        <begin position="90"/>
        <end position="92"/>
    </location>
</feature>
<feature type="helix" evidence="15">
    <location>
        <begin position="100"/>
        <end position="116"/>
    </location>
</feature>
<feature type="helix" evidence="15">
    <location>
        <begin position="120"/>
        <end position="126"/>
    </location>
</feature>
<feature type="strand" evidence="14">
    <location>
        <begin position="131"/>
        <end position="133"/>
    </location>
</feature>
<feature type="strand" evidence="15">
    <location>
        <begin position="137"/>
        <end position="139"/>
    </location>
</feature>
<feature type="helix" evidence="16">
    <location>
        <begin position="141"/>
        <end position="144"/>
    </location>
</feature>
<proteinExistence type="evidence at protein level"/>
<sequence>MSLVIPEKFQHILRVLNTNIDGRRKIAFAITAIKGVGRRYAHVVLRKADIDLTKRAGELTEDEVERVITIMQNPRQYKIPDWFLNRQKDVKDGKYSQVLANGLDNKLREDLERLKKIRAHRGLRHFWGLRVRGQHTKTTGRRGRTVGVSKKK</sequence>
<reference key="1">
    <citation type="journal article" date="1993" name="Nucleic Acids Res.">
        <title>The human homolog of ribosomal protein S18.</title>
        <authorList>
            <person name="Chassin D."/>
            <person name="Bellet D."/>
            <person name="Koman A."/>
        </authorList>
    </citation>
    <scope>NUCLEOTIDE SEQUENCE [MRNA]</scope>
    <source>
        <tissue>Placenta</tissue>
    </source>
</reference>
<reference key="2">
    <citation type="journal article" date="2003" name="Nature">
        <title>The DNA sequence and analysis of human chromosome 6.</title>
        <authorList>
            <person name="Mungall A.J."/>
            <person name="Palmer S.A."/>
            <person name="Sims S.K."/>
            <person name="Edwards C.A."/>
            <person name="Ashurst J.L."/>
            <person name="Wilming L."/>
            <person name="Jones M.C."/>
            <person name="Horton R."/>
            <person name="Hunt S.E."/>
            <person name="Scott C.E."/>
            <person name="Gilbert J.G.R."/>
            <person name="Clamp M.E."/>
            <person name="Bethel G."/>
            <person name="Milne S."/>
            <person name="Ainscough R."/>
            <person name="Almeida J.P."/>
            <person name="Ambrose K.D."/>
            <person name="Andrews T.D."/>
            <person name="Ashwell R.I.S."/>
            <person name="Babbage A.K."/>
            <person name="Bagguley C.L."/>
            <person name="Bailey J."/>
            <person name="Banerjee R."/>
            <person name="Barker D.J."/>
            <person name="Barlow K.F."/>
            <person name="Bates K."/>
            <person name="Beare D.M."/>
            <person name="Beasley H."/>
            <person name="Beasley O."/>
            <person name="Bird C.P."/>
            <person name="Blakey S.E."/>
            <person name="Bray-Allen S."/>
            <person name="Brook J."/>
            <person name="Brown A.J."/>
            <person name="Brown J.Y."/>
            <person name="Burford D.C."/>
            <person name="Burrill W."/>
            <person name="Burton J."/>
            <person name="Carder C."/>
            <person name="Carter N.P."/>
            <person name="Chapman J.C."/>
            <person name="Clark S.Y."/>
            <person name="Clark G."/>
            <person name="Clee C.M."/>
            <person name="Clegg S."/>
            <person name="Cobley V."/>
            <person name="Collier R.E."/>
            <person name="Collins J.E."/>
            <person name="Colman L.K."/>
            <person name="Corby N.R."/>
            <person name="Coville G.J."/>
            <person name="Culley K.M."/>
            <person name="Dhami P."/>
            <person name="Davies J."/>
            <person name="Dunn M."/>
            <person name="Earthrowl M.E."/>
            <person name="Ellington A.E."/>
            <person name="Evans K.A."/>
            <person name="Faulkner L."/>
            <person name="Francis M.D."/>
            <person name="Frankish A."/>
            <person name="Frankland J."/>
            <person name="French L."/>
            <person name="Garner P."/>
            <person name="Garnett J."/>
            <person name="Ghori M.J."/>
            <person name="Gilby L.M."/>
            <person name="Gillson C.J."/>
            <person name="Glithero R.J."/>
            <person name="Grafham D.V."/>
            <person name="Grant M."/>
            <person name="Gribble S."/>
            <person name="Griffiths C."/>
            <person name="Griffiths M.N.D."/>
            <person name="Hall R."/>
            <person name="Halls K.S."/>
            <person name="Hammond S."/>
            <person name="Harley J.L."/>
            <person name="Hart E.A."/>
            <person name="Heath P.D."/>
            <person name="Heathcott R."/>
            <person name="Holmes S.J."/>
            <person name="Howden P.J."/>
            <person name="Howe K.L."/>
            <person name="Howell G.R."/>
            <person name="Huckle E."/>
            <person name="Humphray S.J."/>
            <person name="Humphries M.D."/>
            <person name="Hunt A.R."/>
            <person name="Johnson C.M."/>
            <person name="Joy A.A."/>
            <person name="Kay M."/>
            <person name="Keenan S.J."/>
            <person name="Kimberley A.M."/>
            <person name="King A."/>
            <person name="Laird G.K."/>
            <person name="Langford C."/>
            <person name="Lawlor S."/>
            <person name="Leongamornlert D.A."/>
            <person name="Leversha M."/>
            <person name="Lloyd C.R."/>
            <person name="Lloyd D.M."/>
            <person name="Loveland J.E."/>
            <person name="Lovell J."/>
            <person name="Martin S."/>
            <person name="Mashreghi-Mohammadi M."/>
            <person name="Maslen G.L."/>
            <person name="Matthews L."/>
            <person name="McCann O.T."/>
            <person name="McLaren S.J."/>
            <person name="McLay K."/>
            <person name="McMurray A."/>
            <person name="Moore M.J.F."/>
            <person name="Mullikin J.C."/>
            <person name="Niblett D."/>
            <person name="Nickerson T."/>
            <person name="Novik K.L."/>
            <person name="Oliver K."/>
            <person name="Overton-Larty E.K."/>
            <person name="Parker A."/>
            <person name="Patel R."/>
            <person name="Pearce A.V."/>
            <person name="Peck A.I."/>
            <person name="Phillimore B.J.C.T."/>
            <person name="Phillips S."/>
            <person name="Plumb R.W."/>
            <person name="Porter K.M."/>
            <person name="Ramsey Y."/>
            <person name="Ranby S.A."/>
            <person name="Rice C.M."/>
            <person name="Ross M.T."/>
            <person name="Searle S.M."/>
            <person name="Sehra H.K."/>
            <person name="Sheridan E."/>
            <person name="Skuce C.D."/>
            <person name="Smith S."/>
            <person name="Smith M."/>
            <person name="Spraggon L."/>
            <person name="Squares S.L."/>
            <person name="Steward C.A."/>
            <person name="Sycamore N."/>
            <person name="Tamlyn-Hall G."/>
            <person name="Tester J."/>
            <person name="Theaker A.J."/>
            <person name="Thomas D.W."/>
            <person name="Thorpe A."/>
            <person name="Tracey A."/>
            <person name="Tromans A."/>
            <person name="Tubby B."/>
            <person name="Wall M."/>
            <person name="Wallis J.M."/>
            <person name="West A.P."/>
            <person name="White S.S."/>
            <person name="Whitehead S.L."/>
            <person name="Whittaker H."/>
            <person name="Wild A."/>
            <person name="Willey D.J."/>
            <person name="Wilmer T.E."/>
            <person name="Wood J.M."/>
            <person name="Wray P.W."/>
            <person name="Wyatt J.C."/>
            <person name="Young L."/>
            <person name="Younger R.M."/>
            <person name="Bentley D.R."/>
            <person name="Coulson A."/>
            <person name="Durbin R.M."/>
            <person name="Hubbard T."/>
            <person name="Sulston J.E."/>
            <person name="Dunham I."/>
            <person name="Rogers J."/>
            <person name="Beck S."/>
        </authorList>
    </citation>
    <scope>NUCLEOTIDE SEQUENCE [LARGE SCALE GENOMIC DNA]</scope>
</reference>
<reference key="3">
    <citation type="submission" date="2005-07" db="EMBL/GenBank/DDBJ databases">
        <authorList>
            <person name="Mural R.J."/>
            <person name="Istrail S."/>
            <person name="Sutton G.G."/>
            <person name="Florea L."/>
            <person name="Halpern A.L."/>
            <person name="Mobarry C.M."/>
            <person name="Lippert R."/>
            <person name="Walenz B."/>
            <person name="Shatkay H."/>
            <person name="Dew I."/>
            <person name="Miller J.R."/>
            <person name="Flanigan M.J."/>
            <person name="Edwards N.J."/>
            <person name="Bolanos R."/>
            <person name="Fasulo D."/>
            <person name="Halldorsson B.V."/>
            <person name="Hannenhalli S."/>
            <person name="Turner R."/>
            <person name="Yooseph S."/>
            <person name="Lu F."/>
            <person name="Nusskern D.R."/>
            <person name="Shue B.C."/>
            <person name="Zheng X.H."/>
            <person name="Zhong F."/>
            <person name="Delcher A.L."/>
            <person name="Huson D.H."/>
            <person name="Kravitz S.A."/>
            <person name="Mouchard L."/>
            <person name="Reinert K."/>
            <person name="Remington K.A."/>
            <person name="Clark A.G."/>
            <person name="Waterman M.S."/>
            <person name="Eichler E.E."/>
            <person name="Adams M.D."/>
            <person name="Hunkapiller M.W."/>
            <person name="Myers E.W."/>
            <person name="Venter J.C."/>
        </authorList>
    </citation>
    <scope>NUCLEOTIDE SEQUENCE [LARGE SCALE GENOMIC DNA]</scope>
</reference>
<reference key="4">
    <citation type="journal article" date="2004" name="Genome Res.">
        <title>The status, quality, and expansion of the NIH full-length cDNA project: the Mammalian Gene Collection (MGC).</title>
        <authorList>
            <consortium name="The MGC Project Team"/>
        </authorList>
    </citation>
    <scope>NUCLEOTIDE SEQUENCE [LARGE SCALE MRNA]</scope>
    <source>
        <tissue>Bone</tissue>
        <tissue>Brain</tissue>
    </source>
</reference>
<reference key="5">
    <citation type="submission" date="2006-11" db="UniProtKB">
        <authorList>
            <person name="Bienvenut W.V."/>
            <person name="Heiserich L."/>
            <person name="Boulahbel H."/>
            <person name="Gottlieb E."/>
        </authorList>
    </citation>
    <scope>PROTEIN SEQUENCE OF 2-23; 25-34; 40-75; 79-86; 95-113 AND 125-130</scope>
    <scope>CLEAVAGE OF INITIATOR METHIONINE</scope>
    <scope>ACETYLATION AT SER-2</scope>
    <scope>IDENTIFICATION BY MASS SPECTROMETRY</scope>
    <source>
        <tissue>Colon carcinoma</tissue>
    </source>
</reference>
<reference key="6">
    <citation type="journal article" date="1996" name="Eur. J. Biochem.">
        <title>Characterization of the human small-ribosomal-subunit proteins by N-terminal and internal sequencing, and mass spectrometry.</title>
        <authorList>
            <person name="Vladimirov S.N."/>
            <person name="Ivanov A.V."/>
            <person name="Karpova G.G."/>
            <person name="Musolyamov A.K."/>
            <person name="Egorov T.A."/>
            <person name="Thiede B."/>
            <person name="Wittmann-Liebold B."/>
            <person name="Otto A."/>
        </authorList>
    </citation>
    <scope>PROTEIN SEQUENCE OF 55-69</scope>
    <source>
        <tissue>Placenta</tissue>
    </source>
</reference>
<reference key="7">
    <citation type="journal article" date="2003" name="Nature">
        <title>Proteomic characterization of the human centrosome by protein correlation profiling.</title>
        <authorList>
            <person name="Andersen J.S."/>
            <person name="Wilkinson C.J."/>
            <person name="Mayor T."/>
            <person name="Mortensen P."/>
            <person name="Nigg E.A."/>
            <person name="Mann M."/>
        </authorList>
    </citation>
    <scope>IDENTIFICATION BY MASS SPECTROMETRY</scope>
    <source>
        <tissue>Lymphoblast</tissue>
    </source>
</reference>
<reference key="8">
    <citation type="journal article" date="2009" name="Anal. Chem.">
        <title>Lys-N and trypsin cover complementary parts of the phosphoproteome in a refined SCX-based approach.</title>
        <authorList>
            <person name="Gauci S."/>
            <person name="Helbig A.O."/>
            <person name="Slijper M."/>
            <person name="Krijgsveld J."/>
            <person name="Heck A.J."/>
            <person name="Mohammed S."/>
        </authorList>
    </citation>
    <scope>ACETYLATION [LARGE SCALE ANALYSIS] AT SER-2</scope>
    <scope>CLEAVAGE OF INITIATOR METHIONINE [LARGE SCALE ANALYSIS]</scope>
    <scope>IDENTIFICATION BY MASS SPECTROMETRY [LARGE SCALE ANALYSIS]</scope>
</reference>
<reference key="9">
    <citation type="journal article" date="2009" name="Science">
        <title>Lysine acetylation targets protein complexes and co-regulates major cellular functions.</title>
        <authorList>
            <person name="Choudhary C."/>
            <person name="Kumar C."/>
            <person name="Gnad F."/>
            <person name="Nielsen M.L."/>
            <person name="Rehman M."/>
            <person name="Walther T.C."/>
            <person name="Olsen J.V."/>
            <person name="Mann M."/>
        </authorList>
    </citation>
    <scope>ACETYLATION [LARGE SCALE ANALYSIS] AT LYS-94 AND LYS-106</scope>
    <scope>IDENTIFICATION BY MASS SPECTROMETRY [LARGE SCALE ANALYSIS]</scope>
</reference>
<reference key="10">
    <citation type="journal article" date="2011" name="BMC Syst. Biol.">
        <title>Initial characterization of the human central proteome.</title>
        <authorList>
            <person name="Burkard T.R."/>
            <person name="Planyavsky M."/>
            <person name="Kaupe I."/>
            <person name="Breitwieser F.P."/>
            <person name="Buerckstuemmer T."/>
            <person name="Bennett K.L."/>
            <person name="Superti-Furga G."/>
            <person name="Colinge J."/>
        </authorList>
    </citation>
    <scope>IDENTIFICATION BY MASS SPECTROMETRY [LARGE SCALE ANALYSIS]</scope>
</reference>
<reference key="11">
    <citation type="journal article" date="2012" name="Mol. Cell. Proteomics">
        <title>Comparative large-scale characterisation of plant vs. mammal proteins reveals similar and idiosyncratic N-alpha acetylation features.</title>
        <authorList>
            <person name="Bienvenut W.V."/>
            <person name="Sumpton D."/>
            <person name="Martinez A."/>
            <person name="Lilla S."/>
            <person name="Espagne C."/>
            <person name="Meinnel T."/>
            <person name="Giglione C."/>
        </authorList>
    </citation>
    <scope>ACETYLATION [LARGE SCALE ANALYSIS] AT SER-2</scope>
    <scope>CLEAVAGE OF INITIATOR METHIONINE [LARGE SCALE ANALYSIS]</scope>
    <scope>IDENTIFICATION BY MASS SPECTROMETRY [LARGE SCALE ANALYSIS]</scope>
</reference>
<reference key="12">
    <citation type="journal article" date="2014" name="Curr. Opin. Struct. Biol.">
        <title>A new system for naming ribosomal proteins.</title>
        <authorList>
            <person name="Ban N."/>
            <person name="Beckmann R."/>
            <person name="Cate J.H.D."/>
            <person name="Dinman J.D."/>
            <person name="Dragon F."/>
            <person name="Ellis S.R."/>
            <person name="Lafontaine D.L.J."/>
            <person name="Lindahl L."/>
            <person name="Liljas A."/>
            <person name="Lipton J.M."/>
            <person name="McAlear M.A."/>
            <person name="Moore P.B."/>
            <person name="Noller H.F."/>
            <person name="Ortega J."/>
            <person name="Panse V.G."/>
            <person name="Ramakrishnan V."/>
            <person name="Spahn C.M.T."/>
            <person name="Steitz T.A."/>
            <person name="Tchorzewski M."/>
            <person name="Tollervey D."/>
            <person name="Warren A.J."/>
            <person name="Williamson J.R."/>
            <person name="Wilson D."/>
            <person name="Yonath A."/>
            <person name="Yusupov M."/>
        </authorList>
    </citation>
    <scope>NOMENCLATURE</scope>
</reference>
<reference key="13">
    <citation type="journal article" date="2014" name="J. Proteomics">
        <title>An enzyme assisted RP-RPLC approach for in-depth analysis of human liver phosphoproteome.</title>
        <authorList>
            <person name="Bian Y."/>
            <person name="Song C."/>
            <person name="Cheng K."/>
            <person name="Dong M."/>
            <person name="Wang F."/>
            <person name="Huang J."/>
            <person name="Sun D."/>
            <person name="Wang L."/>
            <person name="Ye M."/>
            <person name="Zou H."/>
        </authorList>
    </citation>
    <scope>IDENTIFICATION BY MASS SPECTROMETRY [LARGE SCALE ANALYSIS]</scope>
    <source>
        <tissue>Liver</tissue>
    </source>
</reference>
<reference key="14">
    <citation type="journal article" date="2015" name="Proteomics">
        <title>N-terminome analysis of the human mitochondrial proteome.</title>
        <authorList>
            <person name="Vaca Jacome A.S."/>
            <person name="Rabilloud T."/>
            <person name="Schaeffer-Reiss C."/>
            <person name="Rompais M."/>
            <person name="Ayoub D."/>
            <person name="Lane L."/>
            <person name="Bairoch A."/>
            <person name="Van Dorsselaer A."/>
            <person name="Carapito C."/>
        </authorList>
    </citation>
    <scope>ACETYLATION [LARGE SCALE ANALYSIS] AT SER-2</scope>
    <scope>CLEAVAGE OF INITIATOR METHIONINE [LARGE SCALE ANALYSIS]</scope>
    <scope>IDENTIFICATION BY MASS SPECTROMETRY [LARGE SCALE ANALYSIS]</scope>
</reference>
<reference key="15">
    <citation type="journal article" date="2017" name="Nat. Struct. Mol. Biol.">
        <title>Site-specific mapping of the human SUMO proteome reveals co-modification with phosphorylation.</title>
        <authorList>
            <person name="Hendriks I.A."/>
            <person name="Lyon D."/>
            <person name="Young C."/>
            <person name="Jensen L.J."/>
            <person name="Vertegaal A.C."/>
            <person name="Nielsen M.L."/>
        </authorList>
    </citation>
    <scope>SUMOYLATION [LARGE SCALE ANALYSIS] AT LYS-91; LYS-94 AND LYS-106</scope>
    <scope>IDENTIFICATION BY MASS SPECTROMETRY [LARGE SCALE ANALYSIS]</scope>
</reference>
<reference key="16">
    <citation type="journal article" date="2013" name="Nature">
        <title>Structures of the human and Drosophila 80S ribosome.</title>
        <authorList>
            <person name="Anger A.M."/>
            <person name="Armache J.P."/>
            <person name="Berninghausen O."/>
            <person name="Habeck M."/>
            <person name="Subklewe M."/>
            <person name="Wilson D.N."/>
            <person name="Beckmann R."/>
        </authorList>
    </citation>
    <scope>STRUCTURE BY ELECTRON MICROSCOPY (5.0 ANGSTROMS) OF RIBOSOME</scope>
    <scope>FUNCTION</scope>
    <scope>SUBUNIT</scope>
    <scope>SUBCELLULAR LOCATION</scope>
</reference>
<gene>
    <name type="primary">RPS18</name>
    <name type="synonym">D6S218E</name>
</gene>
<comment type="function">
    <text evidence="1">Component of the small ribosomal subunit. The ribosome is a large ribonucleoprotein complex responsible for the synthesis of proteins in the cell.</text>
</comment>
<comment type="subunit">
    <text evidence="1">Component of the small ribosomal subunit.</text>
</comment>
<comment type="interaction">
    <interactant intactId="EBI-352451">
        <id>P62269</id>
    </interactant>
    <interactant intactId="EBI-347804">
        <id>P68400</id>
        <label>CSNK2A1</label>
    </interactant>
    <organismsDiffer>false</organismsDiffer>
    <experiments>2</experiments>
</comment>
<comment type="interaction">
    <interactant intactId="EBI-352451">
        <id>P62269</id>
    </interactant>
    <interactant intactId="EBI-5323863">
        <id>Q5S007</id>
        <label>LRRK2</label>
    </interactant>
    <organismsDiffer>false</organismsDiffer>
    <experiments>3</experiments>
</comment>
<comment type="subcellular location">
    <subcellularLocation>
        <location evidence="1">Cytoplasm</location>
    </subcellularLocation>
</comment>
<comment type="similarity">
    <text evidence="4">Belongs to the universal ribosomal protein uS13 family.</text>
</comment>
<name>RS18_HUMAN</name>
<protein>
    <recommendedName>
        <fullName evidence="3">Small ribosomal subunit protein uS13</fullName>
    </recommendedName>
    <alternativeName>
        <fullName>40S ribosomal protein S18</fullName>
    </alternativeName>
    <alternativeName>
        <fullName>Ke-3</fullName>
        <shortName>Ke3</shortName>
    </alternativeName>
</protein>